<dbReference type="EMBL" id="AE014291">
    <property type="protein sequence ID" value="AAN29592.1"/>
    <property type="molecule type" value="Genomic_DNA"/>
</dbReference>
<dbReference type="EMBL" id="CP002997">
    <property type="protein sequence ID" value="AEM18009.1"/>
    <property type="molecule type" value="Genomic_DNA"/>
</dbReference>
<dbReference type="RefSeq" id="WP_004691926.1">
    <property type="nucleotide sequence ID" value="NZ_KN046804.1"/>
</dbReference>
<dbReference type="SMR" id="Q8G1P9"/>
<dbReference type="GeneID" id="55590388"/>
<dbReference type="KEGG" id="bms:BR0663"/>
<dbReference type="KEGG" id="bsi:BS1330_I0659"/>
<dbReference type="PATRIC" id="fig|204722.22.peg.1181"/>
<dbReference type="HOGENOM" id="CLU_038009_1_1_5"/>
<dbReference type="PhylomeDB" id="Q8G1P9"/>
<dbReference type="Proteomes" id="UP000007104">
    <property type="component" value="Chromosome I"/>
</dbReference>
<dbReference type="GO" id="GO:0005829">
    <property type="term" value="C:cytosol"/>
    <property type="evidence" value="ECO:0007669"/>
    <property type="project" value="TreeGrafter"/>
</dbReference>
<dbReference type="GO" id="GO:0005886">
    <property type="term" value="C:plasma membrane"/>
    <property type="evidence" value="ECO:0007669"/>
    <property type="project" value="UniProtKB-SubCell"/>
</dbReference>
<dbReference type="GO" id="GO:0005525">
    <property type="term" value="F:GTP binding"/>
    <property type="evidence" value="ECO:0007669"/>
    <property type="project" value="UniProtKB-UniRule"/>
</dbReference>
<dbReference type="GO" id="GO:0003924">
    <property type="term" value="F:GTPase activity"/>
    <property type="evidence" value="ECO:0007669"/>
    <property type="project" value="UniProtKB-UniRule"/>
</dbReference>
<dbReference type="GO" id="GO:0043024">
    <property type="term" value="F:ribosomal small subunit binding"/>
    <property type="evidence" value="ECO:0007669"/>
    <property type="project" value="TreeGrafter"/>
</dbReference>
<dbReference type="GO" id="GO:0070181">
    <property type="term" value="F:small ribosomal subunit rRNA binding"/>
    <property type="evidence" value="ECO:0007669"/>
    <property type="project" value="UniProtKB-UniRule"/>
</dbReference>
<dbReference type="GO" id="GO:0000028">
    <property type="term" value="P:ribosomal small subunit assembly"/>
    <property type="evidence" value="ECO:0007669"/>
    <property type="project" value="TreeGrafter"/>
</dbReference>
<dbReference type="CDD" id="cd04163">
    <property type="entry name" value="Era"/>
    <property type="match status" value="1"/>
</dbReference>
<dbReference type="CDD" id="cd22534">
    <property type="entry name" value="KH-II_Era"/>
    <property type="match status" value="1"/>
</dbReference>
<dbReference type="FunFam" id="3.40.50.300:FF:001190">
    <property type="entry name" value="GTP-binding protein ERG"/>
    <property type="match status" value="1"/>
</dbReference>
<dbReference type="FunFam" id="3.30.300.20:FF:000031">
    <property type="entry name" value="GTPase Era"/>
    <property type="match status" value="1"/>
</dbReference>
<dbReference type="Gene3D" id="3.30.300.20">
    <property type="match status" value="1"/>
</dbReference>
<dbReference type="Gene3D" id="3.40.50.300">
    <property type="entry name" value="P-loop containing nucleotide triphosphate hydrolases"/>
    <property type="match status" value="1"/>
</dbReference>
<dbReference type="HAMAP" id="MF_00367">
    <property type="entry name" value="GTPase_Era"/>
    <property type="match status" value="1"/>
</dbReference>
<dbReference type="InterPro" id="IPR030388">
    <property type="entry name" value="G_ERA_dom"/>
</dbReference>
<dbReference type="InterPro" id="IPR006073">
    <property type="entry name" value="GTP-bd"/>
</dbReference>
<dbReference type="InterPro" id="IPR005662">
    <property type="entry name" value="GTPase_Era-like"/>
</dbReference>
<dbReference type="InterPro" id="IPR015946">
    <property type="entry name" value="KH_dom-like_a/b"/>
</dbReference>
<dbReference type="InterPro" id="IPR004044">
    <property type="entry name" value="KH_dom_type_2"/>
</dbReference>
<dbReference type="InterPro" id="IPR009019">
    <property type="entry name" value="KH_sf_prok-type"/>
</dbReference>
<dbReference type="InterPro" id="IPR027417">
    <property type="entry name" value="P-loop_NTPase"/>
</dbReference>
<dbReference type="InterPro" id="IPR005225">
    <property type="entry name" value="Small_GTP-bd"/>
</dbReference>
<dbReference type="NCBIfam" id="TIGR00436">
    <property type="entry name" value="era"/>
    <property type="match status" value="1"/>
</dbReference>
<dbReference type="NCBIfam" id="NF000908">
    <property type="entry name" value="PRK00089.1"/>
    <property type="match status" value="1"/>
</dbReference>
<dbReference type="NCBIfam" id="TIGR00231">
    <property type="entry name" value="small_GTP"/>
    <property type="match status" value="1"/>
</dbReference>
<dbReference type="PANTHER" id="PTHR42698">
    <property type="entry name" value="GTPASE ERA"/>
    <property type="match status" value="1"/>
</dbReference>
<dbReference type="PANTHER" id="PTHR42698:SF1">
    <property type="entry name" value="GTPASE ERA, MITOCHONDRIAL"/>
    <property type="match status" value="1"/>
</dbReference>
<dbReference type="Pfam" id="PF07650">
    <property type="entry name" value="KH_2"/>
    <property type="match status" value="1"/>
</dbReference>
<dbReference type="Pfam" id="PF01926">
    <property type="entry name" value="MMR_HSR1"/>
    <property type="match status" value="1"/>
</dbReference>
<dbReference type="SUPFAM" id="SSF52540">
    <property type="entry name" value="P-loop containing nucleoside triphosphate hydrolases"/>
    <property type="match status" value="1"/>
</dbReference>
<dbReference type="SUPFAM" id="SSF54814">
    <property type="entry name" value="Prokaryotic type KH domain (KH-domain type II)"/>
    <property type="match status" value="1"/>
</dbReference>
<dbReference type="PROSITE" id="PS51713">
    <property type="entry name" value="G_ERA"/>
    <property type="match status" value="1"/>
</dbReference>
<dbReference type="PROSITE" id="PS50823">
    <property type="entry name" value="KH_TYPE_2"/>
    <property type="match status" value="1"/>
</dbReference>
<sequence>MNNGTSPAGGETEATQTRSGFVALIGAPNAGKSTLVNQLVGTKVSIVTHKVQTTRALVRGIFIEGPAQIVLVDTPGIFRPKRRLDRAMVTTAWGGAKDADIILVIIDAQGGFNENAEALLESMKDVRQKKVLVLNKVDRVDPPVLLSLAQKANELVPFDRTFMISALNGSGCKDLAKYLAESVPNGPWYYPEDQISDIPMRQLAAEITREKLYLRLHEELPYASTVETERWEERKDGSVRIEQVIYVERESQKKIVLGHKGETVKAIGQAARKEISEILEQTVHLFLFVKVRENWGNDPERYREMGLDFPT</sequence>
<feature type="chain" id="PRO_0000180001" description="GTPase Era">
    <location>
        <begin position="1"/>
        <end position="311"/>
    </location>
</feature>
<feature type="domain" description="Era-type G" evidence="2">
    <location>
        <begin position="18"/>
        <end position="185"/>
    </location>
</feature>
<feature type="domain" description="KH type-2" evidence="1">
    <location>
        <begin position="216"/>
        <end position="293"/>
    </location>
</feature>
<feature type="region of interest" description="G1" evidence="2">
    <location>
        <begin position="26"/>
        <end position="33"/>
    </location>
</feature>
<feature type="region of interest" description="G2" evidence="2">
    <location>
        <begin position="52"/>
        <end position="56"/>
    </location>
</feature>
<feature type="region of interest" description="G3" evidence="2">
    <location>
        <begin position="73"/>
        <end position="76"/>
    </location>
</feature>
<feature type="region of interest" description="G4" evidence="2">
    <location>
        <begin position="135"/>
        <end position="138"/>
    </location>
</feature>
<feature type="region of interest" description="G5" evidence="2">
    <location>
        <begin position="164"/>
        <end position="166"/>
    </location>
</feature>
<feature type="binding site" evidence="1">
    <location>
        <begin position="26"/>
        <end position="33"/>
    </location>
    <ligand>
        <name>GTP</name>
        <dbReference type="ChEBI" id="CHEBI:37565"/>
    </ligand>
</feature>
<feature type="binding site" evidence="1">
    <location>
        <begin position="73"/>
        <end position="77"/>
    </location>
    <ligand>
        <name>GTP</name>
        <dbReference type="ChEBI" id="CHEBI:37565"/>
    </ligand>
</feature>
<feature type="binding site" evidence="1">
    <location>
        <begin position="135"/>
        <end position="138"/>
    </location>
    <ligand>
        <name>GTP</name>
        <dbReference type="ChEBI" id="CHEBI:37565"/>
    </ligand>
</feature>
<reference key="1">
    <citation type="journal article" date="2002" name="Proc. Natl. Acad. Sci. U.S.A.">
        <title>The Brucella suis genome reveals fundamental similarities between animal and plant pathogens and symbionts.</title>
        <authorList>
            <person name="Paulsen I.T."/>
            <person name="Seshadri R."/>
            <person name="Nelson K.E."/>
            <person name="Eisen J.A."/>
            <person name="Heidelberg J.F."/>
            <person name="Read T.D."/>
            <person name="Dodson R.J."/>
            <person name="Umayam L.A."/>
            <person name="Brinkac L.M."/>
            <person name="Beanan M.J."/>
            <person name="Daugherty S.C."/>
            <person name="DeBoy R.T."/>
            <person name="Durkin A.S."/>
            <person name="Kolonay J.F."/>
            <person name="Madupu R."/>
            <person name="Nelson W.C."/>
            <person name="Ayodeji B."/>
            <person name="Kraul M."/>
            <person name="Shetty J."/>
            <person name="Malek J.A."/>
            <person name="Van Aken S.E."/>
            <person name="Riedmuller S."/>
            <person name="Tettelin H."/>
            <person name="Gill S.R."/>
            <person name="White O."/>
            <person name="Salzberg S.L."/>
            <person name="Hoover D.L."/>
            <person name="Lindler L.E."/>
            <person name="Halling S.M."/>
            <person name="Boyle S.M."/>
            <person name="Fraser C.M."/>
        </authorList>
    </citation>
    <scope>NUCLEOTIDE SEQUENCE [LARGE SCALE GENOMIC DNA]</scope>
    <source>
        <strain>1330</strain>
    </source>
</reference>
<reference key="2">
    <citation type="journal article" date="2011" name="J. Bacteriol.">
        <title>Revised genome sequence of Brucella suis 1330.</title>
        <authorList>
            <person name="Tae H."/>
            <person name="Shallom S."/>
            <person name="Settlage R."/>
            <person name="Preston D."/>
            <person name="Adams L.G."/>
            <person name="Garner H.R."/>
        </authorList>
    </citation>
    <scope>NUCLEOTIDE SEQUENCE [LARGE SCALE GENOMIC DNA]</scope>
    <source>
        <strain>1330</strain>
    </source>
</reference>
<gene>
    <name evidence="1" type="primary">era</name>
    <name type="ordered locus">BR0663</name>
    <name type="ordered locus">BS1330_I0659</name>
</gene>
<name>ERA_BRUSU</name>
<keyword id="KW-0997">Cell inner membrane</keyword>
<keyword id="KW-1003">Cell membrane</keyword>
<keyword id="KW-0963">Cytoplasm</keyword>
<keyword id="KW-0342">GTP-binding</keyword>
<keyword id="KW-0472">Membrane</keyword>
<keyword id="KW-0547">Nucleotide-binding</keyword>
<keyword id="KW-0690">Ribosome biogenesis</keyword>
<keyword id="KW-0694">RNA-binding</keyword>
<keyword id="KW-0699">rRNA-binding</keyword>
<protein>
    <recommendedName>
        <fullName evidence="1">GTPase Era</fullName>
    </recommendedName>
</protein>
<accession>Q8G1P9</accession>
<accession>G0K804</accession>
<proteinExistence type="inferred from homology"/>
<organism>
    <name type="scientific">Brucella suis biovar 1 (strain 1330)</name>
    <dbReference type="NCBI Taxonomy" id="204722"/>
    <lineage>
        <taxon>Bacteria</taxon>
        <taxon>Pseudomonadati</taxon>
        <taxon>Pseudomonadota</taxon>
        <taxon>Alphaproteobacteria</taxon>
        <taxon>Hyphomicrobiales</taxon>
        <taxon>Brucellaceae</taxon>
        <taxon>Brucella/Ochrobactrum group</taxon>
        <taxon>Brucella</taxon>
    </lineage>
</organism>
<comment type="function">
    <text evidence="1">An essential GTPase that binds both GDP and GTP, with rapid nucleotide exchange. Plays a role in 16S rRNA processing and 30S ribosomal subunit biogenesis and possibly also in cell cycle regulation and energy metabolism.</text>
</comment>
<comment type="subunit">
    <text evidence="1">Monomer.</text>
</comment>
<comment type="subcellular location">
    <subcellularLocation>
        <location>Cytoplasm</location>
    </subcellularLocation>
    <subcellularLocation>
        <location evidence="1">Cell inner membrane</location>
        <topology evidence="1">Peripheral membrane protein</topology>
    </subcellularLocation>
</comment>
<comment type="similarity">
    <text evidence="1 2">Belongs to the TRAFAC class TrmE-Era-EngA-EngB-Septin-like GTPase superfamily. Era GTPase family.</text>
</comment>
<evidence type="ECO:0000255" key="1">
    <source>
        <dbReference type="HAMAP-Rule" id="MF_00367"/>
    </source>
</evidence>
<evidence type="ECO:0000255" key="2">
    <source>
        <dbReference type="PROSITE-ProRule" id="PRU01050"/>
    </source>
</evidence>